<reference key="1">
    <citation type="journal article" date="2000" name="J. Biol. Chem.">
        <title>Isolation and characterization of peroxisome proliferator-activated receptor (PPAR) interacting protein (PRIP) as a coactivator for PPAR.</title>
        <authorList>
            <person name="Zhu Y.-J."/>
            <person name="Kan L."/>
            <person name="Qi C."/>
            <person name="Kanwar Y.S."/>
            <person name="Yeldandi A.V."/>
            <person name="Rao M.S."/>
            <person name="Reddy J.K."/>
        </authorList>
    </citation>
    <scope>NUCLEOTIDE SEQUENCE [MRNA] (ISOFORMS 1 AND 2)</scope>
    <scope>INTERACTION WITH PPARA; PPARG; RARA; RXRA; ESR1; ESR2 AND THRB</scope>
    <source>
        <tissue>Liver</tissue>
    </source>
</reference>
<reference key="2">
    <citation type="journal article" date="2004" name="Genome Res.">
        <title>The status, quality, and expansion of the NIH full-length cDNA project: the Mammalian Gene Collection (MGC).</title>
        <authorList>
            <consortium name="The MGC Project Team"/>
        </authorList>
    </citation>
    <scope>NUCLEOTIDE SEQUENCE [LARGE SCALE MRNA] (ISOFORM 2)</scope>
    <source>
        <strain>FVB/N</strain>
        <tissue>Mammary tumor</tissue>
    </source>
</reference>
<reference key="3">
    <citation type="journal article" date="2000" name="J. Biol. Chem.">
        <title>Cloning and characterization of RAP250, a nuclear receptor coactivator.</title>
        <authorList>
            <person name="Caira F."/>
            <person name="Antonson P."/>
            <person name="Pelto-Huikko M."/>
            <person name="Treuter E."/>
            <person name="Gustafsson J.-A."/>
        </authorList>
    </citation>
    <scope>NUCLEOTIDE SEQUENCE [MRNA] OF 786-1142 (ISOFORM 1)</scope>
    <scope>INTERACTION WITH PPARA; PPARG; ESR1; ESR2; THRA AND THRB</scope>
    <scope>MUTAGENESIS OF 891-LEU--LEU-894</scope>
    <source>
        <tissue>Embryo</tissue>
    </source>
</reference>
<reference key="4">
    <citation type="journal article" date="2002" name="J. Biol. Chem.">
        <title>Molecular cloning and characterization of CAPER, a novel coactivator of activating protein-1 and estrogen receptors.</title>
        <authorList>
            <person name="Jung D.-J."/>
            <person name="Na S.-Y."/>
            <person name="Na D.S."/>
            <person name="Lee J.W."/>
        </authorList>
    </citation>
    <scope>INTERACTION WITH RBM39</scope>
</reference>
<reference key="5">
    <citation type="journal article" date="2010" name="Cell">
        <title>A tissue-specific atlas of mouse protein phosphorylation and expression.</title>
        <authorList>
            <person name="Huttlin E.L."/>
            <person name="Jedrychowski M.P."/>
            <person name="Elias J.E."/>
            <person name="Goswami T."/>
            <person name="Rad R."/>
            <person name="Beausoleil S.A."/>
            <person name="Villen J."/>
            <person name="Haas W."/>
            <person name="Sowa M.E."/>
            <person name="Gygi S.P."/>
        </authorList>
    </citation>
    <scope>PHOSPHORYLATION [LARGE SCALE ANALYSIS] AT SER-2022</scope>
    <scope>IDENTIFICATION BY MASS SPECTROMETRY [LARGE SCALE ANALYSIS]</scope>
    <source>
        <tissue>Lung</tissue>
        <tissue>Spleen</tissue>
    </source>
</reference>
<reference key="6">
    <citation type="journal article" date="2013" name="Mol. Cell">
        <title>SIRT5-mediated lysine desuccinylation impacts diverse metabolic pathways.</title>
        <authorList>
            <person name="Park J."/>
            <person name="Chen Y."/>
            <person name="Tishkoff D.X."/>
            <person name="Peng C."/>
            <person name="Tan M."/>
            <person name="Dai L."/>
            <person name="Xie Z."/>
            <person name="Zhang Y."/>
            <person name="Zwaans B.M."/>
            <person name="Skinner M.E."/>
            <person name="Lombard D.B."/>
            <person name="Zhao Y."/>
        </authorList>
    </citation>
    <scope>ACETYLATION [LARGE SCALE ANALYSIS] AT LYS-1822 AND LYS-1825</scope>
    <scope>IDENTIFICATION BY MASS SPECTROMETRY [LARGE SCALE ANALYSIS]</scope>
    <source>
        <tissue>Embryonic fibroblast</tissue>
    </source>
</reference>
<reference key="7">
    <citation type="journal article" date="2014" name="Mol. Cell. Proteomics">
        <title>Immunoaffinity enrichment and mass spectrometry analysis of protein methylation.</title>
        <authorList>
            <person name="Guo A."/>
            <person name="Gu H."/>
            <person name="Zhou J."/>
            <person name="Mulhern D."/>
            <person name="Wang Y."/>
            <person name="Lee K.A."/>
            <person name="Yang V."/>
            <person name="Aguiar M."/>
            <person name="Kornhauser J."/>
            <person name="Jia X."/>
            <person name="Ren J."/>
            <person name="Beausoleil S.A."/>
            <person name="Silva J.C."/>
            <person name="Vemulapalli V."/>
            <person name="Bedford M.T."/>
            <person name="Comb M.J."/>
        </authorList>
    </citation>
    <scope>METHYLATION [LARGE SCALE ANALYSIS] AT ARG-95; ARG-1050; ARG-1061 AND ARG-1099</scope>
    <scope>IDENTIFICATION BY MASS SPECTROMETRY [LARGE SCALE ANALYSIS]</scope>
    <source>
        <tissue>Brain</tissue>
        <tissue>Embryo</tissue>
    </source>
</reference>
<accession>Q9JL19</accession>
<accession>Q9JLT9</accession>
<dbReference type="EMBL" id="AF216186">
    <property type="protein sequence ID" value="AAF35860.1"/>
    <property type="molecule type" value="mRNA"/>
</dbReference>
<dbReference type="EMBL" id="BC031113">
    <property type="protein sequence ID" value="AAH31113.1"/>
    <property type="molecule type" value="mRNA"/>
</dbReference>
<dbReference type="EMBL" id="AF135169">
    <property type="protein sequence ID" value="AAF35973.1"/>
    <property type="molecule type" value="mRNA"/>
</dbReference>
<dbReference type="CORUM" id="Q9JL19"/>
<dbReference type="DIP" id="DIP-61283N"/>
<dbReference type="ELM" id="Q9JL19"/>
<dbReference type="FunCoup" id="Q9JL19">
    <property type="interactions" value="1831"/>
</dbReference>
<dbReference type="IntAct" id="Q9JL19">
    <property type="interactions" value="2"/>
</dbReference>
<dbReference type="STRING" id="10090.ENSMUSP00000105295"/>
<dbReference type="GlyGen" id="Q9JL19">
    <property type="glycosylation" value="8 sites, 1 O-linked glycan (5 sites)"/>
</dbReference>
<dbReference type="iPTMnet" id="Q9JL19"/>
<dbReference type="PhosphoSitePlus" id="Q9JL19"/>
<dbReference type="PaxDb" id="10090-ENSMUSP00000105295"/>
<dbReference type="PeptideAtlas" id="Q9JL19"/>
<dbReference type="ProteomicsDB" id="287456">
    <molecule id="Q9JL19-1"/>
</dbReference>
<dbReference type="ProteomicsDB" id="287457">
    <molecule id="Q9JL19-2"/>
</dbReference>
<dbReference type="Pumba" id="Q9JL19"/>
<dbReference type="AGR" id="MGI:1929915"/>
<dbReference type="MGI" id="MGI:1929915">
    <property type="gene designation" value="Ncoa6"/>
</dbReference>
<dbReference type="eggNOG" id="ENOG502QQMS">
    <property type="taxonomic scope" value="Eukaryota"/>
</dbReference>
<dbReference type="InParanoid" id="Q9JL19"/>
<dbReference type="OrthoDB" id="5967287at2759"/>
<dbReference type="Reactome" id="R-MMU-400206">
    <property type="pathway name" value="Regulation of lipid metabolism by PPARalpha"/>
</dbReference>
<dbReference type="Reactome" id="R-MMU-9707564">
    <property type="pathway name" value="Cytoprotection by HMOX1"/>
</dbReference>
<dbReference type="Reactome" id="R-MMU-9772755">
    <property type="pathway name" value="Formation of WDR5-containing histone-modifying complexes"/>
</dbReference>
<dbReference type="Reactome" id="R-MMU-9818564">
    <property type="pathway name" value="Epigenetic regulation of gene expression by MLL3 and MLL4 complexes"/>
</dbReference>
<dbReference type="ChiTaRS" id="Ncoa6">
    <property type="organism name" value="mouse"/>
</dbReference>
<dbReference type="PRO" id="PR:Q9JL19"/>
<dbReference type="Proteomes" id="UP000000589">
    <property type="component" value="Unplaced"/>
</dbReference>
<dbReference type="RNAct" id="Q9JL19">
    <property type="molecule type" value="protein"/>
</dbReference>
<dbReference type="GO" id="GO:0035097">
    <property type="term" value="C:histone methyltransferase complex"/>
    <property type="evidence" value="ECO:0000266"/>
    <property type="project" value="MGI"/>
</dbReference>
<dbReference type="GO" id="GO:0005654">
    <property type="term" value="C:nucleoplasm"/>
    <property type="evidence" value="ECO:0000304"/>
    <property type="project" value="Reactome"/>
</dbReference>
<dbReference type="GO" id="GO:0005634">
    <property type="term" value="C:nucleus"/>
    <property type="evidence" value="ECO:0000314"/>
    <property type="project" value="CACAO"/>
</dbReference>
<dbReference type="GO" id="GO:0005667">
    <property type="term" value="C:transcription regulator complex"/>
    <property type="evidence" value="ECO:0000314"/>
    <property type="project" value="MGI"/>
</dbReference>
<dbReference type="GO" id="GO:0003682">
    <property type="term" value="F:chromatin binding"/>
    <property type="evidence" value="ECO:0000314"/>
    <property type="project" value="MGI"/>
</dbReference>
<dbReference type="GO" id="GO:0140463">
    <property type="term" value="F:chromatin-protein adaptor activity"/>
    <property type="evidence" value="ECO:0000315"/>
    <property type="project" value="MGI"/>
</dbReference>
<dbReference type="GO" id="GO:1990226">
    <property type="term" value="F:histone methyltransferase binding"/>
    <property type="evidence" value="ECO:0000353"/>
    <property type="project" value="MGI"/>
</dbReference>
<dbReference type="GO" id="GO:0046966">
    <property type="term" value="F:nuclear thyroid hormone receptor binding"/>
    <property type="evidence" value="ECO:0000250"/>
    <property type="project" value="UniProtKB"/>
</dbReference>
<dbReference type="GO" id="GO:0003713">
    <property type="term" value="F:transcription coactivator activity"/>
    <property type="evidence" value="ECO:0000314"/>
    <property type="project" value="MGI"/>
</dbReference>
<dbReference type="GO" id="GO:0007420">
    <property type="term" value="P:brain development"/>
    <property type="evidence" value="ECO:0000315"/>
    <property type="project" value="MGI"/>
</dbReference>
<dbReference type="GO" id="GO:0006974">
    <property type="term" value="P:DNA damage response"/>
    <property type="evidence" value="ECO:0000266"/>
    <property type="project" value="MGI"/>
</dbReference>
<dbReference type="GO" id="GO:0007507">
    <property type="term" value="P:heart development"/>
    <property type="evidence" value="ECO:0000315"/>
    <property type="project" value="MGI"/>
</dbReference>
<dbReference type="GO" id="GO:0060716">
    <property type="term" value="P:labyrinthine layer blood vessel development"/>
    <property type="evidence" value="ECO:0000315"/>
    <property type="project" value="MGI"/>
</dbReference>
<dbReference type="GO" id="GO:0030099">
    <property type="term" value="P:myeloid cell differentiation"/>
    <property type="evidence" value="ECO:0000250"/>
    <property type="project" value="UniProtKB"/>
</dbReference>
<dbReference type="GO" id="GO:0045893">
    <property type="term" value="P:positive regulation of DNA-templated transcription"/>
    <property type="evidence" value="ECO:0000314"/>
    <property type="project" value="MGI"/>
</dbReference>
<dbReference type="GO" id="GO:0010468">
    <property type="term" value="P:regulation of gene expression"/>
    <property type="evidence" value="ECO:0000315"/>
    <property type="project" value="MGI"/>
</dbReference>
<dbReference type="InterPro" id="IPR026638">
    <property type="entry name" value="NCOA6"/>
</dbReference>
<dbReference type="InterPro" id="IPR032715">
    <property type="entry name" value="NCOA6_TRADD-N"/>
</dbReference>
<dbReference type="PANTHER" id="PTHR15690">
    <property type="entry name" value="NUCLEAR RECEPTOR COACTIVATOR 6"/>
    <property type="match status" value="1"/>
</dbReference>
<dbReference type="PANTHER" id="PTHR15690:SF0">
    <property type="entry name" value="NUCLEAR RECEPTOR COACTIVATOR 6"/>
    <property type="match status" value="1"/>
</dbReference>
<dbReference type="Pfam" id="PF13820">
    <property type="entry name" value="NCOA6_TRADD-N"/>
    <property type="match status" value="1"/>
</dbReference>
<organism>
    <name type="scientific">Mus musculus</name>
    <name type="common">Mouse</name>
    <dbReference type="NCBI Taxonomy" id="10090"/>
    <lineage>
        <taxon>Eukaryota</taxon>
        <taxon>Metazoa</taxon>
        <taxon>Chordata</taxon>
        <taxon>Craniata</taxon>
        <taxon>Vertebrata</taxon>
        <taxon>Euteleostomi</taxon>
        <taxon>Mammalia</taxon>
        <taxon>Eutheria</taxon>
        <taxon>Euarchontoglires</taxon>
        <taxon>Glires</taxon>
        <taxon>Rodentia</taxon>
        <taxon>Myomorpha</taxon>
        <taxon>Muroidea</taxon>
        <taxon>Muridae</taxon>
        <taxon>Murinae</taxon>
        <taxon>Mus</taxon>
        <taxon>Mus</taxon>
    </lineage>
</organism>
<feature type="chain" id="PRO_0000094414" description="Nuclear receptor coactivator 6">
    <location>
        <begin position="1"/>
        <end position="2067"/>
    </location>
</feature>
<feature type="region of interest" description="NCOA1-binding region" evidence="1">
    <location>
        <begin position="1"/>
        <end position="1314"/>
    </location>
</feature>
<feature type="region of interest" description="CREBBP-binding region" evidence="1">
    <location>
        <begin position="1"/>
        <end position="1060"/>
    </location>
</feature>
<feature type="region of interest" description="TBP/GTF2A-binding region" evidence="1">
    <location>
        <begin position="1"/>
        <end position="932"/>
    </location>
</feature>
<feature type="region of interest" description="Disordered" evidence="3">
    <location>
        <begin position="181"/>
        <end position="253"/>
    </location>
</feature>
<feature type="region of interest" description="Disordered" evidence="3">
    <location>
        <begin position="293"/>
        <end position="548"/>
    </location>
</feature>
<feature type="region of interest" description="NCOA6IP-binding region" evidence="1">
    <location>
        <begin position="777"/>
        <end position="931"/>
    </location>
</feature>
<feature type="region of interest" description="Disordered" evidence="3">
    <location>
        <begin position="903"/>
        <end position="1279"/>
    </location>
</feature>
<feature type="region of interest" description="Disordered" evidence="3">
    <location>
        <begin position="1313"/>
        <end position="1358"/>
    </location>
</feature>
<feature type="region of interest" description="Disordered" evidence="3">
    <location>
        <begin position="1424"/>
        <end position="1481"/>
    </location>
</feature>
<feature type="region of interest" description="Disordered" evidence="3">
    <location>
        <begin position="1497"/>
        <end position="1581"/>
    </location>
</feature>
<feature type="region of interest" description="EP300/CRSP3-binding region" evidence="1">
    <location>
        <begin position="1644"/>
        <end position="2067"/>
    </location>
</feature>
<feature type="region of interest" description="Disordered" evidence="3">
    <location>
        <begin position="1769"/>
        <end position="1822"/>
    </location>
</feature>
<feature type="region of interest" description="Disordered" evidence="3">
    <location>
        <begin position="1840"/>
        <end position="1911"/>
    </location>
</feature>
<feature type="region of interest" description="Disordered" evidence="3">
    <location>
        <begin position="1957"/>
        <end position="2067"/>
    </location>
</feature>
<feature type="short sequence motif" description="LXXLL motif 1">
    <location>
        <begin position="891"/>
        <end position="895"/>
    </location>
</feature>
<feature type="short sequence motif" description="LXXLL motif 2">
    <location>
        <begin position="1495"/>
        <end position="1499"/>
    </location>
</feature>
<feature type="compositionally biased region" description="Low complexity" evidence="3">
    <location>
        <begin position="293"/>
        <end position="304"/>
    </location>
</feature>
<feature type="compositionally biased region" description="Polar residues" evidence="3">
    <location>
        <begin position="338"/>
        <end position="347"/>
    </location>
</feature>
<feature type="compositionally biased region" description="Polar residues" evidence="3">
    <location>
        <begin position="357"/>
        <end position="372"/>
    </location>
</feature>
<feature type="compositionally biased region" description="Polar residues" evidence="3">
    <location>
        <begin position="383"/>
        <end position="405"/>
    </location>
</feature>
<feature type="compositionally biased region" description="Polar residues" evidence="3">
    <location>
        <begin position="421"/>
        <end position="457"/>
    </location>
</feature>
<feature type="compositionally biased region" description="Polar residues" evidence="3">
    <location>
        <begin position="465"/>
        <end position="506"/>
    </location>
</feature>
<feature type="compositionally biased region" description="Polar residues" evidence="3">
    <location>
        <begin position="526"/>
        <end position="548"/>
    </location>
</feature>
<feature type="compositionally biased region" description="Low complexity" evidence="3">
    <location>
        <begin position="907"/>
        <end position="916"/>
    </location>
</feature>
<feature type="compositionally biased region" description="Basic residues" evidence="3">
    <location>
        <begin position="917"/>
        <end position="929"/>
    </location>
</feature>
<feature type="compositionally biased region" description="Low complexity" evidence="3">
    <location>
        <begin position="984"/>
        <end position="996"/>
    </location>
</feature>
<feature type="compositionally biased region" description="Pro residues" evidence="3">
    <location>
        <begin position="999"/>
        <end position="1024"/>
    </location>
</feature>
<feature type="compositionally biased region" description="Low complexity" evidence="3">
    <location>
        <begin position="1025"/>
        <end position="1044"/>
    </location>
</feature>
<feature type="compositionally biased region" description="Polar residues" evidence="3">
    <location>
        <begin position="1066"/>
        <end position="1078"/>
    </location>
</feature>
<feature type="compositionally biased region" description="Polar residues" evidence="3">
    <location>
        <begin position="1103"/>
        <end position="1123"/>
    </location>
</feature>
<feature type="compositionally biased region" description="Low complexity" evidence="3">
    <location>
        <begin position="1124"/>
        <end position="1137"/>
    </location>
</feature>
<feature type="compositionally biased region" description="Polar residues" evidence="3">
    <location>
        <begin position="1152"/>
        <end position="1165"/>
    </location>
</feature>
<feature type="compositionally biased region" description="Polar residues" evidence="3">
    <location>
        <begin position="1176"/>
        <end position="1194"/>
    </location>
</feature>
<feature type="compositionally biased region" description="Polar residues" evidence="3">
    <location>
        <begin position="1205"/>
        <end position="1217"/>
    </location>
</feature>
<feature type="compositionally biased region" description="Pro residues" evidence="3">
    <location>
        <begin position="1222"/>
        <end position="1235"/>
    </location>
</feature>
<feature type="compositionally biased region" description="Polar residues" evidence="3">
    <location>
        <begin position="1313"/>
        <end position="1324"/>
    </location>
</feature>
<feature type="compositionally biased region" description="Low complexity" evidence="3">
    <location>
        <begin position="1326"/>
        <end position="1349"/>
    </location>
</feature>
<feature type="compositionally biased region" description="Polar residues" evidence="3">
    <location>
        <begin position="1424"/>
        <end position="1435"/>
    </location>
</feature>
<feature type="compositionally biased region" description="Low complexity" evidence="3">
    <location>
        <begin position="1545"/>
        <end position="1562"/>
    </location>
</feature>
<feature type="compositionally biased region" description="Polar residues" evidence="3">
    <location>
        <begin position="1775"/>
        <end position="1805"/>
    </location>
</feature>
<feature type="compositionally biased region" description="Low complexity" evidence="3">
    <location>
        <begin position="1806"/>
        <end position="1818"/>
    </location>
</feature>
<feature type="compositionally biased region" description="Polar residues" evidence="3">
    <location>
        <begin position="1871"/>
        <end position="1883"/>
    </location>
</feature>
<feature type="compositionally biased region" description="Low complexity" evidence="3">
    <location>
        <begin position="1892"/>
        <end position="1904"/>
    </location>
</feature>
<feature type="compositionally biased region" description="Basic and acidic residues" evidence="3">
    <location>
        <begin position="2005"/>
        <end position="2014"/>
    </location>
</feature>
<feature type="modified residue" description="Asymmetric dimethylarginine" evidence="10">
    <location>
        <position position="95"/>
    </location>
</feature>
<feature type="modified residue" description="Phosphoserine" evidence="2">
    <location>
        <position position="888"/>
    </location>
</feature>
<feature type="modified residue" description="Asymmetric dimethylarginine" evidence="10">
    <location>
        <position position="1050"/>
    </location>
</feature>
<feature type="modified residue" description="Asymmetric dimethylarginine" evidence="10">
    <location>
        <position position="1061"/>
    </location>
</feature>
<feature type="modified residue" description="Asymmetric dimethylarginine" evidence="10">
    <location>
        <position position="1099"/>
    </location>
</feature>
<feature type="modified residue" description="N6-acetyllysine" evidence="9">
    <location>
        <position position="1822"/>
    </location>
</feature>
<feature type="modified residue" description="N6-acetyllysine" evidence="9">
    <location>
        <position position="1825"/>
    </location>
</feature>
<feature type="modified residue" description="Phosphoserine" evidence="8">
    <location>
        <position position="2022"/>
    </location>
</feature>
<feature type="splice variant" id="VSP_003410" description="In isoform 2." evidence="5 6">
    <location>
        <begin position="458"/>
        <end position="2067"/>
    </location>
</feature>
<feature type="mutagenesis site" description="Abolishes interaction with nuclear receptors." evidence="4">
    <original>LVNL</original>
    <variation>AVNA</variation>
    <location>
        <begin position="891"/>
        <end position="894"/>
    </location>
</feature>
<feature type="sequence conflict" description="In Ref. 2; AAH31113." evidence="7" ref="2">
    <original>G</original>
    <variation>S</variation>
    <location>
        <position position="39"/>
    </location>
</feature>
<feature type="sequence conflict" description="In Ref. 2; AAH31113." evidence="7" ref="2">
    <original>W</original>
    <variation>R</variation>
    <location>
        <position position="109"/>
    </location>
</feature>
<feature type="sequence conflict" description="In Ref. 2; AAH31113." evidence="7" ref="2">
    <original>M</original>
    <variation>I</variation>
    <location>
        <position position="194"/>
    </location>
</feature>
<feature type="sequence conflict" description="In Ref. 2; AAH31113." evidence="7" ref="2">
    <original>Q</original>
    <variation>QQ</variation>
    <location>
        <position position="290"/>
    </location>
</feature>
<feature type="sequence conflict" description="In Ref. 3; AAF35973." evidence="7" ref="3">
    <original>P</original>
    <variation>L</variation>
    <location>
        <position position="1014"/>
    </location>
</feature>
<feature type="sequence conflict" description="In Ref. 3; AAF35973." evidence="7" ref="3">
    <original>SE</original>
    <variation>RS</variation>
    <location>
        <begin position="1141"/>
        <end position="1142"/>
    </location>
</feature>
<name>NCOA6_MOUSE</name>
<gene>
    <name type="primary">Ncoa6</name>
    <name type="synonym">Aib3</name>
    <name type="synonym">Prip</name>
    <name type="synonym">Rap250</name>
    <name type="synonym">Trbp</name>
</gene>
<keyword id="KW-0007">Acetylation</keyword>
<keyword id="KW-0010">Activator</keyword>
<keyword id="KW-0025">Alternative splicing</keyword>
<keyword id="KW-0488">Methylation</keyword>
<keyword id="KW-0539">Nucleus</keyword>
<keyword id="KW-0597">Phosphoprotein</keyword>
<keyword id="KW-1185">Reference proteome</keyword>
<keyword id="KW-0677">Repeat</keyword>
<keyword id="KW-0804">Transcription</keyword>
<keyword id="KW-0805">Transcription regulation</keyword>
<sequence>MVLDDLPNFEDIYTSLCSSTMGDSEVEFDSGLEDDDTKGDSILEDSTIFVAFKGNIDDKDFKWKLDAILKNVPNLLHMESSKLKVQKVEPWNSVRVTFNIPREAAERLWILAQSNNQQLRDLGILSVQIEGEGAINLALGQNRSQDVRMNGPVASGNSVRMEAGFPMASGPGLIRMTSPAAVMTPQGGNMSSSMMAPGPNPELQPRTPRPASQSDAMDPLLSGLHIQQQSHPSGSLPPAHHSMQPVPVNRQMNPANFPQLQQQQQQQQQQQQQQQQQQQQQQQQQQQQQQLQTRPLQQHQQQPQGIRPQFTAPTQVPVPPGWNQLPSGALQPPPAQGSLGTMTTNQGWKKAPLPSPMQAQLQARPSLATVQTPSHPPPPYPFGSQQASQAHTNFPQMSNPGQFTAPQMKGLQGGPSRVPTPLQQPHLTNKSPASSPSSFQQGSPASSPTVNQTQQQMGPRPPQNNPLSQGFQQPVSSPGRNPMVQQGNVPPNFMVMQQQPPNQGPQSLHPGLGGMPKRLPPGFSAGQANPNFMQGQVPSTTAATPGNSGALQLQANQNVQHAGGQGAGPPQNQMQVSHGPPNMMQPSLMGIHGNINNQQAGSSGVPQVTLGNMQGQPQQGPPSQLMGMHQQIVPSQGQMAQQQGTLNPQNPMILSRAQLMPQGQMMVNAQNQNLGPSPQRMTPPKQMLPQQGPQMMAPHNQMMGPQGQVLLQQNPMIEQIMTNQMQGNKAQFNSQNQSNVMPGPAQIMRGPTPNMQGNMVQFTGQMSGQMLPQQGPVNNSPSQVMGIQGQVLRPPGPSPHMAQQHTDPVTTANNDVNLSQMMPDVSMQQASMVPPHVQSMQGNSASGSHFSGHGVSFNAPFGGAPNGSQMSCGQNPGFPVNKDVTLTSPLLVNLLQSDISAGHFGVNNKQNNTNANKPKKKKPPRKKKNCHQDLNTPDNRPTGLEEVDQQSLPGEQGINLDTTGPKLPDFSNRPPGYPTQPVEQRPLPQMPPQLMQHVAPPPQPPQQQPQPQLPQQQQPPPPSQPQSQQQQQQQQMMMMLMMQQDPKSIRLPVSQNVHPPRGPLNPDSQRMPVQQSGNVPVMVGLQGPASVPPSPDKQRMPMSVNTPMGSNSRKMVYQENPQNSSSSPLGEMSSLPEASGSEVPSVAGGPNNMPSHLVVSQNQLMMTGPKPGPSPLSATQGATPQQPPVNSLPSSHGHHFPNVAAPTQTSRPKTPNRASPRPYYPQTPNNRPPSTEPSEISLSPERLNASIAGLFPPQINIPLPPRPNLNRGFDQQGLNPTTLKAIGQAPSNLTITNPPNFAAPQAHKLDSVVVNSGKQSNPGTTKRASPSNSRRSSPGSSRKTTPSPGRQNSKAPKLTLASQTSTTMLQNMELPRNVLVGPTPLANPPLPGSFPNNTGLNPQNPTVPVPAMGTVLEDNKESVNIPQDSDCQNAQGRKEQVNTELKVVPTQEAKMAVPEDQSKKDGQPLDPNKLPSVEENKNLMSPAMREAPTSLSQLLDNSGAPNVTIKPPGLTDLEVTPPVVSGEDLRKASVIPTLQDPPSKEPSTSLSSPHSSEPCSTLARSELSEVSSNAAPSIPPVMSRPVSSSSISTPLPPNQITVFVTSNPITTSSNTSAALPTHLQSALMSTVVTMPNVGNKVMVSEGQSAAQSNARPQFITPVFINSSSIIQVMKGSQPSTIPATPLTTNSGLMPPSVAVVGPLHIPQNIKFSSAPVTPNVPSSSPAPNIQTGRPLVLSSRATPVQLPSPPCTSSPVVAPNPSVQQVKELNPDEASPQTNTSADQSTLPPSQPTTVVSSLLTNSPGSSANRRSPVSSSKGKGKVDKIGQILLTKACKKVTGSLEKGEEQYGADGETEGPGLEITTPGLMGTEQCSTELDSKTPTPSAPTLLKMTSSPMAPSSTSTGPILPGGALPTSVRSIVTTLVPSELISTAPTTKGNHGGVTSEPLAGGLVEEKVGSHPELLPSIAPSQNLAPKETPATALQGSVARPELEANAAIASGQSCEPKEIVEKSKTLTSRRNSRTEEPTMASESVENGHRKRSSRPASASSSTKDITGAVQSKRRKSK</sequence>
<proteinExistence type="evidence at protein level"/>
<comment type="function">
    <text>Nuclear receptor coactivator that directly binds nuclear receptors and stimulates the transcriptional activities in a hormone-dependent fashion. Coactivates expression in an agonist- and AF2-dependent manner. Involved in the coactivation of different nuclear receptors, such as for steroids (GR and ERs), retinoids (RARs and RXRs), thyroid hormone (TRs), vitamin D3 (VDR) and prostanoids (PPARs). Probably functions as a general coactivator, rather than just a nuclear receptor coactivator. May also be involved in the coactivation of the NF-kappa-B pathway. May coactivate expression via a remodeling of chromatin and its interaction with histone acetyltransferase proteins. Involved in placental, cardiac, hepatic and embryonic development.</text>
</comment>
<comment type="subunit">
    <text evidence="1">Monomer and homodimer. Interacts in vitro with the basal transcription factors GTF2A and TBP, suggesting an autonomous transactivation function. Interacts with NCOA1, CRSP3, RBM14, the histone acetyltransferase proteins EP300 and CREBBP, and with methyltransferase proteins NCOA6IP and PRMT2 (By similarity). Interacts with RBM39. Component of the MLL2/3 complex (also named ASCOM complex), at least composed of KMT2D/MLL2 or KMT2C/MLL3, ASH2L, RBBP5, WDR5, NCOA6, DPY30, KDM6A, PAXIP1/PTIP, PAGR1 and alpha- and beta-tubulin (By similarity). Interacts with ZNF335; may enhance ligand-dependent transcriptional activation by nuclear hormone receptors (By similarity).</text>
</comment>
<comment type="subcellular location">
    <subcellularLocation>
        <location>Nucleus</location>
    </subcellularLocation>
</comment>
<comment type="alternative products">
    <event type="alternative splicing"/>
    <isoform>
        <id>Q9JL19-1</id>
        <name>1</name>
        <sequence type="displayed"/>
    </isoform>
    <isoform>
        <id>Q9JL19-2</id>
        <name>2</name>
        <sequence type="described" ref="VSP_003410"/>
    </isoform>
</comment>
<comment type="tissue specificity">
    <text>Widely expressed. High expression in testis and weak expression in small intestine.</text>
</comment>
<comment type="developmental stage">
    <text>Expressed at 9 dpc in placenta and at weaker level in uterus. High expression in neural tube and in CNS throughout development. High expression in sensory ganglia and retina from 11 dpc. In the alimentary tract and olfactory epithelium expression was seen from 13 dpc. Strong expression present in liver and kidney, from 11 dpc and 13 dpc respectively, and then expression decreased at later stages of development. Moderate expression in lung from 13 dpc, while it decreases during postnatal life. Strong expression in thymus from 15 dpc onwards, and in spleen from 17 dpc and during early postnatal life, then, the expression decreases.</text>
</comment>
<comment type="domain">
    <text>Contains two Leu-Xaa-Xaa-Leu-Leu (LXXLL) motifs. Only motif 1 is essential for the association with nuclear receptors.</text>
</comment>
<comment type="PTM">
    <text evidence="1">Phosphorylated.</text>
</comment>
<comment type="miscellaneous">
    <molecule>Isoform 2</molecule>
    <text evidence="7">Acts as a dominant negative repressor.</text>
</comment>
<evidence type="ECO:0000250" key="1"/>
<evidence type="ECO:0000250" key="2">
    <source>
        <dbReference type="UniProtKB" id="Q14686"/>
    </source>
</evidence>
<evidence type="ECO:0000256" key="3">
    <source>
        <dbReference type="SAM" id="MobiDB-lite"/>
    </source>
</evidence>
<evidence type="ECO:0000269" key="4">
    <source>
    </source>
</evidence>
<evidence type="ECO:0000303" key="5">
    <source>
    </source>
</evidence>
<evidence type="ECO:0000303" key="6">
    <source>
    </source>
</evidence>
<evidence type="ECO:0000305" key="7"/>
<evidence type="ECO:0007744" key="8">
    <source>
    </source>
</evidence>
<evidence type="ECO:0007744" key="9">
    <source>
    </source>
</evidence>
<evidence type="ECO:0007744" key="10">
    <source>
    </source>
</evidence>
<protein>
    <recommendedName>
        <fullName>Nuclear receptor coactivator 6</fullName>
    </recommendedName>
    <alternativeName>
        <fullName>Activating signal cointegrator 2</fullName>
        <shortName>ASC-2</shortName>
    </alternativeName>
    <alternativeName>
        <fullName>Amplified in breast cancer protein 3</fullName>
    </alternativeName>
    <alternativeName>
        <fullName>Cancer-amplified transcriptional coactivator ASC-2</fullName>
    </alternativeName>
    <alternativeName>
        <fullName>Nuclear receptor coactivator RAP250</fullName>
        <shortName>NRC</shortName>
    </alternativeName>
    <alternativeName>
        <fullName>Nuclear receptor-activating protein, 250 kDa</fullName>
    </alternativeName>
    <alternativeName>
        <fullName>Peroxisome proliferator-activated receptor-interacting protein</fullName>
        <shortName>PPAR-interacting protein</shortName>
    </alternativeName>
    <alternativeName>
        <fullName>Thyroid hormone receptor-binding protein</fullName>
    </alternativeName>
</protein>